<dbReference type="EMBL" id="DS499597">
    <property type="protein sequence ID" value="EDP51297.1"/>
    <property type="molecule type" value="Genomic_DNA"/>
</dbReference>
<dbReference type="SMR" id="B0Y356"/>
<dbReference type="EnsemblFungi" id="EDP51297">
    <property type="protein sequence ID" value="EDP51297"/>
    <property type="gene ID" value="AFUB_053010"/>
</dbReference>
<dbReference type="VEuPathDB" id="FungiDB:AFUB_053010"/>
<dbReference type="HOGENOM" id="CLU_062507_0_0_1"/>
<dbReference type="OrthoDB" id="57496at5052"/>
<dbReference type="PhylomeDB" id="B0Y356"/>
<dbReference type="Proteomes" id="UP000001699">
    <property type="component" value="Unassembled WGS sequence"/>
</dbReference>
<dbReference type="GO" id="GO:0022627">
    <property type="term" value="C:cytosolic small ribosomal subunit"/>
    <property type="evidence" value="ECO:0007669"/>
    <property type="project" value="UniProtKB-UniRule"/>
</dbReference>
<dbReference type="GO" id="GO:0003735">
    <property type="term" value="F:structural constituent of ribosome"/>
    <property type="evidence" value="ECO:0007669"/>
    <property type="project" value="UniProtKB-UniRule"/>
</dbReference>
<dbReference type="GO" id="GO:0006412">
    <property type="term" value="P:translation"/>
    <property type="evidence" value="ECO:0007669"/>
    <property type="project" value="UniProtKB-UniRule"/>
</dbReference>
<dbReference type="HAMAP" id="MF_03122">
    <property type="entry name" value="Ribosomal_eS1_euk"/>
    <property type="match status" value="1"/>
</dbReference>
<dbReference type="InterPro" id="IPR001593">
    <property type="entry name" value="Ribosomal_eS1"/>
</dbReference>
<dbReference type="InterPro" id="IPR018281">
    <property type="entry name" value="Ribosomal_eS1_CS"/>
</dbReference>
<dbReference type="InterPro" id="IPR027500">
    <property type="entry name" value="Ribosomal_eS1_euk"/>
</dbReference>
<dbReference type="PANTHER" id="PTHR11830">
    <property type="entry name" value="40S RIBOSOMAL PROTEIN S3A"/>
    <property type="match status" value="1"/>
</dbReference>
<dbReference type="Pfam" id="PF01015">
    <property type="entry name" value="Ribosomal_S3Ae"/>
    <property type="match status" value="1"/>
</dbReference>
<dbReference type="SMART" id="SM01397">
    <property type="entry name" value="Ribosomal_S3Ae"/>
    <property type="match status" value="1"/>
</dbReference>
<dbReference type="PROSITE" id="PS01191">
    <property type="entry name" value="RIBOSOMAL_S3AE"/>
    <property type="match status" value="1"/>
</dbReference>
<reference key="1">
    <citation type="journal article" date="2008" name="PLoS Genet.">
        <title>Genomic islands in the pathogenic filamentous fungus Aspergillus fumigatus.</title>
        <authorList>
            <person name="Fedorova N.D."/>
            <person name="Khaldi N."/>
            <person name="Joardar V.S."/>
            <person name="Maiti R."/>
            <person name="Amedeo P."/>
            <person name="Anderson M.J."/>
            <person name="Crabtree J."/>
            <person name="Silva J.C."/>
            <person name="Badger J.H."/>
            <person name="Albarraq A."/>
            <person name="Angiuoli S."/>
            <person name="Bussey H."/>
            <person name="Bowyer P."/>
            <person name="Cotty P.J."/>
            <person name="Dyer P.S."/>
            <person name="Egan A."/>
            <person name="Galens K."/>
            <person name="Fraser-Liggett C.M."/>
            <person name="Haas B.J."/>
            <person name="Inman J.M."/>
            <person name="Kent R."/>
            <person name="Lemieux S."/>
            <person name="Malavazi I."/>
            <person name="Orvis J."/>
            <person name="Roemer T."/>
            <person name="Ronning C.M."/>
            <person name="Sundaram J.P."/>
            <person name="Sutton G."/>
            <person name="Turner G."/>
            <person name="Venter J.C."/>
            <person name="White O.R."/>
            <person name="Whitty B.R."/>
            <person name="Youngman P."/>
            <person name="Wolfe K.H."/>
            <person name="Goldman G.H."/>
            <person name="Wortman J.R."/>
            <person name="Jiang B."/>
            <person name="Denning D.W."/>
            <person name="Nierman W.C."/>
        </authorList>
    </citation>
    <scope>NUCLEOTIDE SEQUENCE [LARGE SCALE GENOMIC DNA]</scope>
    <source>
        <strain>CBS 144.89 / FGSC A1163 / CEA10</strain>
    </source>
</reference>
<accession>B0Y356</accession>
<comment type="subunit">
    <text evidence="1">Component of the small ribosomal subunit. Mature ribosomes consist of a small (40S) and a large (60S) subunit. The 40S subunit contains about 33 different proteins and 1 molecule of RNA (18S). The 60S subunit contains about 49 different proteins and 3 molecules of RNA (25S, 5.8S and 5S).</text>
</comment>
<comment type="subcellular location">
    <subcellularLocation>
        <location evidence="1">Cytoplasm</location>
    </subcellularLocation>
</comment>
<comment type="similarity">
    <text evidence="1">Belongs to the eukaryotic ribosomal protein eS1 family.</text>
</comment>
<evidence type="ECO:0000255" key="1">
    <source>
        <dbReference type="HAMAP-Rule" id="MF_03122"/>
    </source>
</evidence>
<evidence type="ECO:0000256" key="2">
    <source>
        <dbReference type="SAM" id="MobiDB-lite"/>
    </source>
</evidence>
<evidence type="ECO:0000305" key="3"/>
<name>RS3A_ASPFC</name>
<keyword id="KW-0007">Acetylation</keyword>
<keyword id="KW-0963">Cytoplasm</keyword>
<keyword id="KW-0687">Ribonucleoprotein</keyword>
<keyword id="KW-0689">Ribosomal protein</keyword>
<sequence>MAVGKNKRLSKGKKGVKKRTVDPFSRKDEYSVKAPSTFQIRDVGKTLVNRTSGLKNANDSLKGRIFEVSLADLQNDEDHAFRKVKLRVDEVQGKNCLTNFHGLDFTTDKLRSLVRKWQSLIEANVTVKTTDDYLLRLFAIAFTKRRPNQIKKTTYARSSQIRAIRKKMIEIMQREAASCSLAQLTHKLIPEVIGREIEKATQGIYPLQNVHIRKVKLLKAPKFDLGALLNLHGESTTDDKGHKVEREFKEQVLESV</sequence>
<feature type="initiator methionine" description="Removed" evidence="1">
    <location>
        <position position="1"/>
    </location>
</feature>
<feature type="chain" id="PRO_0000389359" description="Small ribosomal subunit protein eS1">
    <location>
        <begin position="2"/>
        <end position="256"/>
    </location>
</feature>
<feature type="region of interest" description="Disordered" evidence="2">
    <location>
        <begin position="1"/>
        <end position="21"/>
    </location>
</feature>
<feature type="compositionally biased region" description="Basic residues" evidence="2">
    <location>
        <begin position="1"/>
        <end position="18"/>
    </location>
</feature>
<feature type="modified residue" description="N-acetylalanine; partial" evidence="1">
    <location>
        <position position="2"/>
    </location>
</feature>
<protein>
    <recommendedName>
        <fullName evidence="1">Small ribosomal subunit protein eS1</fullName>
    </recommendedName>
    <alternativeName>
        <fullName evidence="3">40S ribosomal protein S1</fullName>
    </alternativeName>
</protein>
<organism>
    <name type="scientific">Aspergillus fumigatus (strain CBS 144.89 / FGSC A1163 / CEA10)</name>
    <name type="common">Neosartorya fumigata</name>
    <dbReference type="NCBI Taxonomy" id="451804"/>
    <lineage>
        <taxon>Eukaryota</taxon>
        <taxon>Fungi</taxon>
        <taxon>Dikarya</taxon>
        <taxon>Ascomycota</taxon>
        <taxon>Pezizomycotina</taxon>
        <taxon>Eurotiomycetes</taxon>
        <taxon>Eurotiomycetidae</taxon>
        <taxon>Eurotiales</taxon>
        <taxon>Aspergillaceae</taxon>
        <taxon>Aspergillus</taxon>
        <taxon>Aspergillus subgen. Fumigati</taxon>
    </lineage>
</organism>
<proteinExistence type="inferred from homology"/>
<gene>
    <name type="primary">rps1</name>
    <name type="ORF">AFUB_053010</name>
</gene>